<feature type="chain" id="PRO_0000440894" description="Receptor-like cytoplasmic kinase 176">
    <location>
        <begin position="1"/>
        <end position="395"/>
    </location>
</feature>
<feature type="domain" description="Protein kinase" evidence="1">
    <location>
        <begin position="70"/>
        <end position="355"/>
    </location>
</feature>
<feature type="region of interest" description="Disordered" evidence="2">
    <location>
        <begin position="1"/>
        <end position="45"/>
    </location>
</feature>
<feature type="region of interest" description="Disordered" evidence="2">
    <location>
        <begin position="359"/>
        <end position="395"/>
    </location>
</feature>
<feature type="compositionally biased region" description="Low complexity" evidence="2">
    <location>
        <begin position="10"/>
        <end position="22"/>
    </location>
</feature>
<feature type="compositionally biased region" description="Low complexity" evidence="2">
    <location>
        <begin position="29"/>
        <end position="39"/>
    </location>
</feature>
<feature type="compositionally biased region" description="Low complexity" evidence="2">
    <location>
        <begin position="369"/>
        <end position="395"/>
    </location>
</feature>
<feature type="active site" description="Proton acceptor" evidence="1">
    <location>
        <position position="205"/>
    </location>
</feature>
<feature type="binding site" evidence="1">
    <location>
        <begin position="76"/>
        <end position="84"/>
    </location>
    <ligand>
        <name>ATP</name>
        <dbReference type="ChEBI" id="CHEBI:30616"/>
    </ligand>
</feature>
<feature type="binding site" evidence="1">
    <location>
        <position position="108"/>
    </location>
    <ligand>
        <name>ATP</name>
        <dbReference type="ChEBI" id="CHEBI:30616"/>
    </ligand>
</feature>
<gene>
    <name evidence="4" type="primary">RLCK176</name>
    <name evidence="7" type="ordered locus">Os05g0110900</name>
    <name evidence="5" type="ordered locus">LOC_Os05g02020</name>
    <name evidence="8" type="ORF">OsJ_16858</name>
    <name evidence="6" type="ORF">P0016H04.10</name>
</gene>
<keyword id="KW-0067">ATP-binding</keyword>
<keyword id="KW-0391">Immunity</keyword>
<keyword id="KW-0399">Innate immunity</keyword>
<keyword id="KW-0418">Kinase</keyword>
<keyword id="KW-0547">Nucleotide-binding</keyword>
<keyword id="KW-0611">Plant defense</keyword>
<keyword id="KW-1185">Reference proteome</keyword>
<keyword id="KW-0723">Serine/threonine-protein kinase</keyword>
<keyword id="KW-0808">Transferase</keyword>
<dbReference type="EC" id="2.7.11.1" evidence="5"/>
<dbReference type="EMBL" id="AC079022">
    <property type="protein sequence ID" value="AAK73157.1"/>
    <property type="molecule type" value="Genomic_DNA"/>
</dbReference>
<dbReference type="EMBL" id="AC079356">
    <property type="protein sequence ID" value="AAU44204.1"/>
    <property type="molecule type" value="Genomic_DNA"/>
</dbReference>
<dbReference type="EMBL" id="AP008211">
    <property type="protein sequence ID" value="BAF16358.1"/>
    <property type="molecule type" value="Genomic_DNA"/>
</dbReference>
<dbReference type="EMBL" id="AP014961">
    <property type="protein sequence ID" value="BAS91920.1"/>
    <property type="molecule type" value="Genomic_DNA"/>
</dbReference>
<dbReference type="EMBL" id="CM000142">
    <property type="protein sequence ID" value="EEE62074.1"/>
    <property type="molecule type" value="Genomic_DNA"/>
</dbReference>
<dbReference type="EMBL" id="AK073169">
    <property type="protein sequence ID" value="BAG93323.1"/>
    <property type="molecule type" value="mRNA"/>
</dbReference>
<dbReference type="SMR" id="Q65XV8"/>
<dbReference type="FunCoup" id="Q65XV8">
    <property type="interactions" value="1582"/>
</dbReference>
<dbReference type="STRING" id="39947.Q65XV8"/>
<dbReference type="PaxDb" id="39947-Q65XV8"/>
<dbReference type="EnsemblPlants" id="Os05t0110900-01">
    <property type="protein sequence ID" value="Os05t0110900-01"/>
    <property type="gene ID" value="Os05g0110900"/>
</dbReference>
<dbReference type="Gramene" id="Os05t0110900-01">
    <property type="protein sequence ID" value="Os05t0110900-01"/>
    <property type="gene ID" value="Os05g0110900"/>
</dbReference>
<dbReference type="KEGG" id="dosa:Os05g0110900"/>
<dbReference type="KEGG" id="osa:4337593"/>
<dbReference type="eggNOG" id="KOG1187">
    <property type="taxonomic scope" value="Eukaryota"/>
</dbReference>
<dbReference type="HOGENOM" id="CLU_000288_21_4_1"/>
<dbReference type="InParanoid" id="Q65XV8"/>
<dbReference type="OMA" id="AIWARTF"/>
<dbReference type="OrthoDB" id="4062651at2759"/>
<dbReference type="PlantReactome" id="R-OSA-9611432">
    <property type="pathway name" value="Recognition of fungal and bacterial pathogens and immunity response"/>
</dbReference>
<dbReference type="Proteomes" id="UP000000763">
    <property type="component" value="Chromosome 5"/>
</dbReference>
<dbReference type="Proteomes" id="UP000007752">
    <property type="component" value="Chromosome 5"/>
</dbReference>
<dbReference type="Proteomes" id="UP000059680">
    <property type="component" value="Chromosome 5"/>
</dbReference>
<dbReference type="GO" id="GO:0005524">
    <property type="term" value="F:ATP binding"/>
    <property type="evidence" value="ECO:0007669"/>
    <property type="project" value="UniProtKB-KW"/>
</dbReference>
<dbReference type="GO" id="GO:0106310">
    <property type="term" value="F:protein serine kinase activity"/>
    <property type="evidence" value="ECO:0007669"/>
    <property type="project" value="RHEA"/>
</dbReference>
<dbReference type="GO" id="GO:0004674">
    <property type="term" value="F:protein serine/threonine kinase activity"/>
    <property type="evidence" value="ECO:0007669"/>
    <property type="project" value="UniProtKB-KW"/>
</dbReference>
<dbReference type="GO" id="GO:0045087">
    <property type="term" value="P:innate immune response"/>
    <property type="evidence" value="ECO:0007669"/>
    <property type="project" value="UniProtKB-KW"/>
</dbReference>
<dbReference type="CDD" id="cd14066">
    <property type="entry name" value="STKc_IRAK"/>
    <property type="match status" value="1"/>
</dbReference>
<dbReference type="FunFam" id="1.10.510.10:FF:000258">
    <property type="entry name" value="Probable serine/threonine-protein kinase PBL8"/>
    <property type="match status" value="1"/>
</dbReference>
<dbReference type="FunFam" id="3.30.200.20:FF:000228">
    <property type="entry name" value="Serine/threonine-protein kinase BIK1"/>
    <property type="match status" value="1"/>
</dbReference>
<dbReference type="Gene3D" id="3.30.200.20">
    <property type="entry name" value="Phosphorylase Kinase, domain 1"/>
    <property type="match status" value="1"/>
</dbReference>
<dbReference type="Gene3D" id="1.10.510.10">
    <property type="entry name" value="Transferase(Phosphotransferase) domain 1"/>
    <property type="match status" value="1"/>
</dbReference>
<dbReference type="InterPro" id="IPR011009">
    <property type="entry name" value="Kinase-like_dom_sf"/>
</dbReference>
<dbReference type="InterPro" id="IPR050823">
    <property type="entry name" value="Plant_Ser_Thr_Prot_Kinase"/>
</dbReference>
<dbReference type="InterPro" id="IPR000719">
    <property type="entry name" value="Prot_kinase_dom"/>
</dbReference>
<dbReference type="InterPro" id="IPR017441">
    <property type="entry name" value="Protein_kinase_ATP_BS"/>
</dbReference>
<dbReference type="InterPro" id="IPR001245">
    <property type="entry name" value="Ser-Thr/Tyr_kinase_cat_dom"/>
</dbReference>
<dbReference type="InterPro" id="IPR008271">
    <property type="entry name" value="Ser/Thr_kinase_AS"/>
</dbReference>
<dbReference type="PANTHER" id="PTHR45621">
    <property type="entry name" value="OS01G0588500 PROTEIN-RELATED"/>
    <property type="match status" value="1"/>
</dbReference>
<dbReference type="Pfam" id="PF07714">
    <property type="entry name" value="PK_Tyr_Ser-Thr"/>
    <property type="match status" value="1"/>
</dbReference>
<dbReference type="SUPFAM" id="SSF56112">
    <property type="entry name" value="Protein kinase-like (PK-like)"/>
    <property type="match status" value="1"/>
</dbReference>
<dbReference type="PROSITE" id="PS00107">
    <property type="entry name" value="PROTEIN_KINASE_ATP"/>
    <property type="match status" value="1"/>
</dbReference>
<dbReference type="PROSITE" id="PS50011">
    <property type="entry name" value="PROTEIN_KINASE_DOM"/>
    <property type="match status" value="1"/>
</dbReference>
<dbReference type="PROSITE" id="PS00108">
    <property type="entry name" value="PROTEIN_KINASE_ST"/>
    <property type="match status" value="1"/>
</dbReference>
<name>RK176_ORYSJ</name>
<sequence>MGNCWGAKISSESPCRSASSPSGGTSKYASNSSVSAASVPPTPRSEDEILEAANVKAFAFNELRTATRNFRPDSVLGEGGFGSVFKGWIDEKTLAPTKPGTGMVIAVKKLNQEGHQGHREWLAEVNYLGQLSHPYLVRLVGYCVEDEQRLLVYEFMPRGSLENHLFRRSTHFQPLSWNLRMKIALGAAKGLAFLHSDKVKVIYRDFKTSNVLLDANYDAKLSDFGLAKDGPTGDKSHVSTRVMGTYGYAAPEYLATGHLTTKSDVYSFGVVLLEMLSGRRALDKNRPTGEHNLVEWARPYLMSKRRIFRILDARLGGQYSLAKAQKAATLALQCISVEAKNRPNMEQVVAVLEQLQDSKETGANPQLQKKSSSKNAGSNGSKPSSKGKPANARLV</sequence>
<proteinExistence type="evidence at protein level"/>
<protein>
    <recommendedName>
        <fullName evidence="4">Receptor-like cytoplasmic kinase 176</fullName>
        <shortName evidence="4">OsRLCK176</shortName>
        <ecNumber evidence="5">2.7.11.1</ecNumber>
    </recommendedName>
</protein>
<comment type="function">
    <text evidence="3">Functions downstream of CERK1 in the microbial peptidoglycans (PGNs) and fungal chitin signaling pathways that mediate innate immunity. Participates in the activation of defense genes during response to PGN and chitin.</text>
</comment>
<comment type="catalytic activity">
    <reaction evidence="5">
        <text>L-seryl-[protein] + ATP = O-phospho-L-seryl-[protein] + ADP + H(+)</text>
        <dbReference type="Rhea" id="RHEA:17989"/>
        <dbReference type="Rhea" id="RHEA-COMP:9863"/>
        <dbReference type="Rhea" id="RHEA-COMP:11604"/>
        <dbReference type="ChEBI" id="CHEBI:15378"/>
        <dbReference type="ChEBI" id="CHEBI:29999"/>
        <dbReference type="ChEBI" id="CHEBI:30616"/>
        <dbReference type="ChEBI" id="CHEBI:83421"/>
        <dbReference type="ChEBI" id="CHEBI:456216"/>
        <dbReference type="EC" id="2.7.11.1"/>
    </reaction>
</comment>
<comment type="catalytic activity">
    <reaction evidence="5">
        <text>L-threonyl-[protein] + ATP = O-phospho-L-threonyl-[protein] + ADP + H(+)</text>
        <dbReference type="Rhea" id="RHEA:46608"/>
        <dbReference type="Rhea" id="RHEA-COMP:11060"/>
        <dbReference type="Rhea" id="RHEA-COMP:11605"/>
        <dbReference type="ChEBI" id="CHEBI:15378"/>
        <dbReference type="ChEBI" id="CHEBI:30013"/>
        <dbReference type="ChEBI" id="CHEBI:30616"/>
        <dbReference type="ChEBI" id="CHEBI:61977"/>
        <dbReference type="ChEBI" id="CHEBI:456216"/>
        <dbReference type="EC" id="2.7.11.1"/>
    </reaction>
</comment>
<comment type="subunit">
    <text evidence="3">Interacts with CERK1.</text>
</comment>
<comment type="similarity">
    <text evidence="1">Belongs to the protein kinase superfamily. Ser/Thr protein kinase family.</text>
</comment>
<accession>Q65XV8</accession>
<accession>Q94HI7</accession>
<evidence type="ECO:0000255" key="1">
    <source>
        <dbReference type="PROSITE-ProRule" id="PRU00159"/>
    </source>
</evidence>
<evidence type="ECO:0000256" key="2">
    <source>
        <dbReference type="SAM" id="MobiDB-lite"/>
    </source>
</evidence>
<evidence type="ECO:0000269" key="3">
    <source>
    </source>
</evidence>
<evidence type="ECO:0000303" key="4">
    <source>
    </source>
</evidence>
<evidence type="ECO:0000305" key="5"/>
<evidence type="ECO:0000312" key="6">
    <source>
        <dbReference type="EMBL" id="AAU44204.1"/>
    </source>
</evidence>
<evidence type="ECO:0000312" key="7">
    <source>
        <dbReference type="EMBL" id="BAF16358.1"/>
    </source>
</evidence>
<evidence type="ECO:0000312" key="8">
    <source>
        <dbReference type="EMBL" id="EEE62074.1"/>
    </source>
</evidence>
<organism>
    <name type="scientific">Oryza sativa subsp. japonica</name>
    <name type="common">Rice</name>
    <dbReference type="NCBI Taxonomy" id="39947"/>
    <lineage>
        <taxon>Eukaryota</taxon>
        <taxon>Viridiplantae</taxon>
        <taxon>Streptophyta</taxon>
        <taxon>Embryophyta</taxon>
        <taxon>Tracheophyta</taxon>
        <taxon>Spermatophyta</taxon>
        <taxon>Magnoliopsida</taxon>
        <taxon>Liliopsida</taxon>
        <taxon>Poales</taxon>
        <taxon>Poaceae</taxon>
        <taxon>BOP clade</taxon>
        <taxon>Oryzoideae</taxon>
        <taxon>Oryzeae</taxon>
        <taxon>Oryzinae</taxon>
        <taxon>Oryza</taxon>
        <taxon>Oryza sativa</taxon>
    </lineage>
</organism>
<reference key="1">
    <citation type="journal article" date="2005" name="Mol. Genet. Genomics">
        <title>A fine physical map of the rice chromosome 5.</title>
        <authorList>
            <person name="Cheng C.-H."/>
            <person name="Chung M.C."/>
            <person name="Liu S.-M."/>
            <person name="Chen S.-K."/>
            <person name="Kao F.Y."/>
            <person name="Lin S.-J."/>
            <person name="Hsiao S.-H."/>
            <person name="Tseng I.C."/>
            <person name="Hsing Y.-I.C."/>
            <person name="Wu H.-P."/>
            <person name="Chen C.-S."/>
            <person name="Shaw J.-F."/>
            <person name="Wu J."/>
            <person name="Matsumoto T."/>
            <person name="Sasaki T."/>
            <person name="Chen H.-C."/>
            <person name="Chow T.-Y."/>
        </authorList>
    </citation>
    <scope>NUCLEOTIDE SEQUENCE [LARGE SCALE GENOMIC DNA]</scope>
    <source>
        <strain>cv. Nipponbare</strain>
    </source>
</reference>
<reference key="2">
    <citation type="journal article" date="2005" name="Nature">
        <title>The map-based sequence of the rice genome.</title>
        <authorList>
            <consortium name="International rice genome sequencing project (IRGSP)"/>
        </authorList>
    </citation>
    <scope>NUCLEOTIDE SEQUENCE [LARGE SCALE GENOMIC DNA]</scope>
    <source>
        <strain>cv. Nipponbare</strain>
    </source>
</reference>
<reference key="3">
    <citation type="journal article" date="2008" name="Nucleic Acids Res.">
        <title>The rice annotation project database (RAP-DB): 2008 update.</title>
        <authorList>
            <consortium name="The rice annotation project (RAP)"/>
        </authorList>
    </citation>
    <scope>GENOME REANNOTATION</scope>
    <source>
        <strain>cv. Nipponbare</strain>
    </source>
</reference>
<reference key="4">
    <citation type="journal article" date="2013" name="Rice">
        <title>Improvement of the Oryza sativa Nipponbare reference genome using next generation sequence and optical map data.</title>
        <authorList>
            <person name="Kawahara Y."/>
            <person name="de la Bastide M."/>
            <person name="Hamilton J.P."/>
            <person name="Kanamori H."/>
            <person name="McCombie W.R."/>
            <person name="Ouyang S."/>
            <person name="Schwartz D.C."/>
            <person name="Tanaka T."/>
            <person name="Wu J."/>
            <person name="Zhou S."/>
            <person name="Childs K.L."/>
            <person name="Davidson R.M."/>
            <person name="Lin H."/>
            <person name="Quesada-Ocampo L."/>
            <person name="Vaillancourt B."/>
            <person name="Sakai H."/>
            <person name="Lee S.S."/>
            <person name="Kim J."/>
            <person name="Numa H."/>
            <person name="Itoh T."/>
            <person name="Buell C.R."/>
            <person name="Matsumoto T."/>
        </authorList>
    </citation>
    <scope>GENOME REANNOTATION</scope>
    <source>
        <strain>cv. Nipponbare</strain>
    </source>
</reference>
<reference key="5">
    <citation type="journal article" date="2005" name="PLoS Biol.">
        <title>The genomes of Oryza sativa: a history of duplications.</title>
        <authorList>
            <person name="Yu J."/>
            <person name="Wang J."/>
            <person name="Lin W."/>
            <person name="Li S."/>
            <person name="Li H."/>
            <person name="Zhou J."/>
            <person name="Ni P."/>
            <person name="Dong W."/>
            <person name="Hu S."/>
            <person name="Zeng C."/>
            <person name="Zhang J."/>
            <person name="Zhang Y."/>
            <person name="Li R."/>
            <person name="Xu Z."/>
            <person name="Li S."/>
            <person name="Li X."/>
            <person name="Zheng H."/>
            <person name="Cong L."/>
            <person name="Lin L."/>
            <person name="Yin J."/>
            <person name="Geng J."/>
            <person name="Li G."/>
            <person name="Shi J."/>
            <person name="Liu J."/>
            <person name="Lv H."/>
            <person name="Li J."/>
            <person name="Wang J."/>
            <person name="Deng Y."/>
            <person name="Ran L."/>
            <person name="Shi X."/>
            <person name="Wang X."/>
            <person name="Wu Q."/>
            <person name="Li C."/>
            <person name="Ren X."/>
            <person name="Wang J."/>
            <person name="Wang X."/>
            <person name="Li D."/>
            <person name="Liu D."/>
            <person name="Zhang X."/>
            <person name="Ji Z."/>
            <person name="Zhao W."/>
            <person name="Sun Y."/>
            <person name="Zhang Z."/>
            <person name="Bao J."/>
            <person name="Han Y."/>
            <person name="Dong L."/>
            <person name="Ji J."/>
            <person name="Chen P."/>
            <person name="Wu S."/>
            <person name="Liu J."/>
            <person name="Xiao Y."/>
            <person name="Bu D."/>
            <person name="Tan J."/>
            <person name="Yang L."/>
            <person name="Ye C."/>
            <person name="Zhang J."/>
            <person name="Xu J."/>
            <person name="Zhou Y."/>
            <person name="Yu Y."/>
            <person name="Zhang B."/>
            <person name="Zhuang S."/>
            <person name="Wei H."/>
            <person name="Liu B."/>
            <person name="Lei M."/>
            <person name="Yu H."/>
            <person name="Li Y."/>
            <person name="Xu H."/>
            <person name="Wei S."/>
            <person name="He X."/>
            <person name="Fang L."/>
            <person name="Zhang Z."/>
            <person name="Zhang Y."/>
            <person name="Huang X."/>
            <person name="Su Z."/>
            <person name="Tong W."/>
            <person name="Li J."/>
            <person name="Tong Z."/>
            <person name="Li S."/>
            <person name="Ye J."/>
            <person name="Wang L."/>
            <person name="Fang L."/>
            <person name="Lei T."/>
            <person name="Chen C.-S."/>
            <person name="Chen H.-C."/>
            <person name="Xu Z."/>
            <person name="Li H."/>
            <person name="Huang H."/>
            <person name="Zhang F."/>
            <person name="Xu H."/>
            <person name="Li N."/>
            <person name="Zhao C."/>
            <person name="Li S."/>
            <person name="Dong L."/>
            <person name="Huang Y."/>
            <person name="Li L."/>
            <person name="Xi Y."/>
            <person name="Qi Q."/>
            <person name="Li W."/>
            <person name="Zhang B."/>
            <person name="Hu W."/>
            <person name="Zhang Y."/>
            <person name="Tian X."/>
            <person name="Jiao Y."/>
            <person name="Liang X."/>
            <person name="Jin J."/>
            <person name="Gao L."/>
            <person name="Zheng W."/>
            <person name="Hao B."/>
            <person name="Liu S.-M."/>
            <person name="Wang W."/>
            <person name="Yuan L."/>
            <person name="Cao M."/>
            <person name="McDermott J."/>
            <person name="Samudrala R."/>
            <person name="Wang J."/>
            <person name="Wong G.K.-S."/>
            <person name="Yang H."/>
        </authorList>
    </citation>
    <scope>NUCLEOTIDE SEQUENCE [LARGE SCALE GENOMIC DNA]</scope>
    <source>
        <strain>cv. Nipponbare</strain>
    </source>
</reference>
<reference key="6">
    <citation type="journal article" date="2003" name="Science">
        <title>Collection, mapping, and annotation of over 28,000 cDNA clones from japonica rice.</title>
        <authorList>
            <consortium name="The rice full-length cDNA consortium"/>
        </authorList>
    </citation>
    <scope>NUCLEOTIDE SEQUENCE [LARGE SCALE MRNA]</scope>
    <source>
        <strain>cv. Nipponbare</strain>
    </source>
</reference>
<reference key="7">
    <citation type="journal article" date="2008" name="Mol. Plant">
        <title>The receptor-like cytoplasmic kinase (OsRLCK) gene family in rice: organization, phylogenetic relationship, and expression during development and stress.</title>
        <authorList>
            <person name="Vij S."/>
            <person name="Giri J."/>
            <person name="Dansana P.K."/>
            <person name="Kapoor S."/>
            <person name="Tyagi A.K."/>
        </authorList>
    </citation>
    <scope>GENE FAMILY</scope>
    <scope>NOMENCLATURE</scope>
</reference>
<reference key="8">
    <citation type="journal article" date="2014" name="Plant J.">
        <title>OsCERK1 and OsRLCK176 play important roles in peptidoglycan and chitin signaling in rice innate immunity.</title>
        <authorList>
            <person name="Ao Y."/>
            <person name="Li Z."/>
            <person name="Feng D."/>
            <person name="Xiong F."/>
            <person name="Liu J."/>
            <person name="Li J.F."/>
            <person name="Wang M."/>
            <person name="Wang J."/>
            <person name="Liu B."/>
            <person name="Wang H.B."/>
        </authorList>
    </citation>
    <scope>FUNCTION</scope>
    <scope>INTERACTION WITH CERK1</scope>
</reference>